<proteinExistence type="predicted"/>
<reference key="1">
    <citation type="journal article" date="1997" name="Nature">
        <title>The complete genome sequence of the Gram-positive bacterium Bacillus subtilis.</title>
        <authorList>
            <person name="Kunst F."/>
            <person name="Ogasawara N."/>
            <person name="Moszer I."/>
            <person name="Albertini A.M."/>
            <person name="Alloni G."/>
            <person name="Azevedo V."/>
            <person name="Bertero M.G."/>
            <person name="Bessieres P."/>
            <person name="Bolotin A."/>
            <person name="Borchert S."/>
            <person name="Borriss R."/>
            <person name="Boursier L."/>
            <person name="Brans A."/>
            <person name="Braun M."/>
            <person name="Brignell S.C."/>
            <person name="Bron S."/>
            <person name="Brouillet S."/>
            <person name="Bruschi C.V."/>
            <person name="Caldwell B."/>
            <person name="Capuano V."/>
            <person name="Carter N.M."/>
            <person name="Choi S.-K."/>
            <person name="Codani J.-J."/>
            <person name="Connerton I.F."/>
            <person name="Cummings N.J."/>
            <person name="Daniel R.A."/>
            <person name="Denizot F."/>
            <person name="Devine K.M."/>
            <person name="Duesterhoeft A."/>
            <person name="Ehrlich S.D."/>
            <person name="Emmerson P.T."/>
            <person name="Entian K.-D."/>
            <person name="Errington J."/>
            <person name="Fabret C."/>
            <person name="Ferrari E."/>
            <person name="Foulger D."/>
            <person name="Fritz C."/>
            <person name="Fujita M."/>
            <person name="Fujita Y."/>
            <person name="Fuma S."/>
            <person name="Galizzi A."/>
            <person name="Galleron N."/>
            <person name="Ghim S.-Y."/>
            <person name="Glaser P."/>
            <person name="Goffeau A."/>
            <person name="Golightly E.J."/>
            <person name="Grandi G."/>
            <person name="Guiseppi G."/>
            <person name="Guy B.J."/>
            <person name="Haga K."/>
            <person name="Haiech J."/>
            <person name="Harwood C.R."/>
            <person name="Henaut A."/>
            <person name="Hilbert H."/>
            <person name="Holsappel S."/>
            <person name="Hosono S."/>
            <person name="Hullo M.-F."/>
            <person name="Itaya M."/>
            <person name="Jones L.-M."/>
            <person name="Joris B."/>
            <person name="Karamata D."/>
            <person name="Kasahara Y."/>
            <person name="Klaerr-Blanchard M."/>
            <person name="Klein C."/>
            <person name="Kobayashi Y."/>
            <person name="Koetter P."/>
            <person name="Koningstein G."/>
            <person name="Krogh S."/>
            <person name="Kumano M."/>
            <person name="Kurita K."/>
            <person name="Lapidus A."/>
            <person name="Lardinois S."/>
            <person name="Lauber J."/>
            <person name="Lazarevic V."/>
            <person name="Lee S.-M."/>
            <person name="Levine A."/>
            <person name="Liu H."/>
            <person name="Masuda S."/>
            <person name="Mauel C."/>
            <person name="Medigue C."/>
            <person name="Medina N."/>
            <person name="Mellado R.P."/>
            <person name="Mizuno M."/>
            <person name="Moestl D."/>
            <person name="Nakai S."/>
            <person name="Noback M."/>
            <person name="Noone D."/>
            <person name="O'Reilly M."/>
            <person name="Ogawa K."/>
            <person name="Ogiwara A."/>
            <person name="Oudega B."/>
            <person name="Park S.-H."/>
            <person name="Parro V."/>
            <person name="Pohl T.M."/>
            <person name="Portetelle D."/>
            <person name="Porwollik S."/>
            <person name="Prescott A.M."/>
            <person name="Presecan E."/>
            <person name="Pujic P."/>
            <person name="Purnelle B."/>
            <person name="Rapoport G."/>
            <person name="Rey M."/>
            <person name="Reynolds S."/>
            <person name="Rieger M."/>
            <person name="Rivolta C."/>
            <person name="Rocha E."/>
            <person name="Roche B."/>
            <person name="Rose M."/>
            <person name="Sadaie Y."/>
            <person name="Sato T."/>
            <person name="Scanlan E."/>
            <person name="Schleich S."/>
            <person name="Schroeter R."/>
            <person name="Scoffone F."/>
            <person name="Sekiguchi J."/>
            <person name="Sekowska A."/>
            <person name="Seror S.J."/>
            <person name="Serror P."/>
            <person name="Shin B.-S."/>
            <person name="Soldo B."/>
            <person name="Sorokin A."/>
            <person name="Tacconi E."/>
            <person name="Takagi T."/>
            <person name="Takahashi H."/>
            <person name="Takemaru K."/>
            <person name="Takeuchi M."/>
            <person name="Tamakoshi A."/>
            <person name="Tanaka T."/>
            <person name="Terpstra P."/>
            <person name="Tognoni A."/>
            <person name="Tosato V."/>
            <person name="Uchiyama S."/>
            <person name="Vandenbol M."/>
            <person name="Vannier F."/>
            <person name="Vassarotti A."/>
            <person name="Viari A."/>
            <person name="Wambutt R."/>
            <person name="Wedler E."/>
            <person name="Wedler H."/>
            <person name="Weitzenegger T."/>
            <person name="Winters P."/>
            <person name="Wipat A."/>
            <person name="Yamamoto H."/>
            <person name="Yamane K."/>
            <person name="Yasumoto K."/>
            <person name="Yata K."/>
            <person name="Yoshida K."/>
            <person name="Yoshikawa H.-F."/>
            <person name="Zumstein E."/>
            <person name="Yoshikawa H."/>
            <person name="Danchin A."/>
        </authorList>
    </citation>
    <scope>NUCLEOTIDE SEQUENCE [LARGE SCALE GENOMIC DNA]</scope>
    <source>
        <strain>168</strain>
    </source>
</reference>
<feature type="chain" id="PRO_0000386657" description="Uncharacterized protein YczK">
    <location>
        <begin position="1"/>
        <end position="58"/>
    </location>
</feature>
<gene>
    <name type="primary">yczK</name>
    <name type="ordered locus">BSU02619</name>
</gene>
<name>YCZK_BACSU</name>
<accession>C0H3T2</accession>
<organism>
    <name type="scientific">Bacillus subtilis (strain 168)</name>
    <dbReference type="NCBI Taxonomy" id="224308"/>
    <lineage>
        <taxon>Bacteria</taxon>
        <taxon>Bacillati</taxon>
        <taxon>Bacillota</taxon>
        <taxon>Bacilli</taxon>
        <taxon>Bacillales</taxon>
        <taxon>Bacillaceae</taxon>
        <taxon>Bacillus</taxon>
    </lineage>
</organism>
<protein>
    <recommendedName>
        <fullName>Uncharacterized protein YczK</fullName>
    </recommendedName>
</protein>
<keyword id="KW-1185">Reference proteome</keyword>
<sequence>MGGLQTTGYAENASFSQLSACFSSRLVREDLFLMFSAYNQFTLLHSRLTMISYNGDDQ</sequence>
<dbReference type="EMBL" id="AL009126">
    <property type="protein sequence ID" value="CAX52543.1"/>
    <property type="molecule type" value="Genomic_DNA"/>
</dbReference>
<dbReference type="RefSeq" id="WP_003246278.1">
    <property type="nucleotide sequence ID" value="NZ_OZ025638.1"/>
</dbReference>
<dbReference type="RefSeq" id="YP_003097673.1">
    <property type="nucleotide sequence ID" value="NC_000964.3"/>
</dbReference>
<dbReference type="FunCoup" id="C0H3T2">
    <property type="interactions" value="2"/>
</dbReference>
<dbReference type="STRING" id="224308.BSU02619"/>
<dbReference type="PaxDb" id="224308-BSU02619"/>
<dbReference type="EnsemblBacteria" id="CAX52543">
    <property type="protein sequence ID" value="CAX52543"/>
    <property type="gene ID" value="BSU_02619"/>
</dbReference>
<dbReference type="GeneID" id="8302909"/>
<dbReference type="KEGG" id="bsu:BSU02619"/>
<dbReference type="PATRIC" id="fig|224308.179.peg.271"/>
<dbReference type="InParanoid" id="C0H3T2"/>
<dbReference type="OrthoDB" id="2899161at2"/>
<dbReference type="BioCyc" id="BSUB:BSU02619-MONOMER"/>
<dbReference type="Proteomes" id="UP000001570">
    <property type="component" value="Chromosome"/>
</dbReference>